<dbReference type="EMBL" id="AF224262">
    <property type="protein sequence ID" value="AAF44646.1"/>
    <property type="molecule type" value="Genomic_DNA"/>
</dbReference>
<dbReference type="SMR" id="Q9IA26"/>
<dbReference type="GO" id="GO:0005634">
    <property type="term" value="C:nucleus"/>
    <property type="evidence" value="ECO:0007669"/>
    <property type="project" value="UniProtKB-SubCell"/>
</dbReference>
<dbReference type="GO" id="GO:0000981">
    <property type="term" value="F:DNA-binding transcription factor activity, RNA polymerase II-specific"/>
    <property type="evidence" value="ECO:0007669"/>
    <property type="project" value="InterPro"/>
</dbReference>
<dbReference type="GO" id="GO:0000978">
    <property type="term" value="F:RNA polymerase II cis-regulatory region sequence-specific DNA binding"/>
    <property type="evidence" value="ECO:0007669"/>
    <property type="project" value="TreeGrafter"/>
</dbReference>
<dbReference type="GO" id="GO:0009952">
    <property type="term" value="P:anterior/posterior pattern specification"/>
    <property type="evidence" value="ECO:0007669"/>
    <property type="project" value="TreeGrafter"/>
</dbReference>
<dbReference type="GO" id="GO:0006351">
    <property type="term" value="P:DNA-templated transcription"/>
    <property type="evidence" value="ECO:0007669"/>
    <property type="project" value="InterPro"/>
</dbReference>
<dbReference type="GO" id="GO:0048704">
    <property type="term" value="P:embryonic skeletal system morphogenesis"/>
    <property type="evidence" value="ECO:0007669"/>
    <property type="project" value="TreeGrafter"/>
</dbReference>
<dbReference type="GO" id="GO:0009954">
    <property type="term" value="P:proximal/distal pattern formation"/>
    <property type="evidence" value="ECO:0007669"/>
    <property type="project" value="TreeGrafter"/>
</dbReference>
<dbReference type="CDD" id="cd00086">
    <property type="entry name" value="homeodomain"/>
    <property type="match status" value="1"/>
</dbReference>
<dbReference type="FunFam" id="1.10.10.60:FF:000018">
    <property type="entry name" value="Homeobox A10"/>
    <property type="match status" value="1"/>
</dbReference>
<dbReference type="Gene3D" id="1.10.10.60">
    <property type="entry name" value="Homeodomain-like"/>
    <property type="match status" value="1"/>
</dbReference>
<dbReference type="InterPro" id="IPR050803">
    <property type="entry name" value="Abd-B_homeobox_TF"/>
</dbReference>
<dbReference type="InterPro" id="IPR001356">
    <property type="entry name" value="HD"/>
</dbReference>
<dbReference type="InterPro" id="IPR020479">
    <property type="entry name" value="HD_metazoa"/>
</dbReference>
<dbReference type="InterPro" id="IPR017970">
    <property type="entry name" value="Homeobox_CS"/>
</dbReference>
<dbReference type="InterPro" id="IPR009057">
    <property type="entry name" value="Homeodomain-like_sf"/>
</dbReference>
<dbReference type="InterPro" id="IPR006711">
    <property type="entry name" value="Hox9_activation_N"/>
</dbReference>
<dbReference type="InterPro" id="IPR017112">
    <property type="entry name" value="HXA9/HXB9/HXC9"/>
</dbReference>
<dbReference type="PANTHER" id="PTHR45970">
    <property type="entry name" value="AGAP004664-PA"/>
    <property type="match status" value="1"/>
</dbReference>
<dbReference type="PANTHER" id="PTHR45970:SF3">
    <property type="entry name" value="HOMEOBOX PROTEIN HOX-A9"/>
    <property type="match status" value="1"/>
</dbReference>
<dbReference type="Pfam" id="PF00046">
    <property type="entry name" value="Homeodomain"/>
    <property type="match status" value="1"/>
</dbReference>
<dbReference type="Pfam" id="PF04617">
    <property type="entry name" value="Hox9_act"/>
    <property type="match status" value="1"/>
</dbReference>
<dbReference type="PIRSF" id="PIRSF037109">
    <property type="entry name" value="Homeobox_Hox9"/>
    <property type="match status" value="1"/>
</dbReference>
<dbReference type="PRINTS" id="PR00024">
    <property type="entry name" value="HOMEOBOX"/>
</dbReference>
<dbReference type="SMART" id="SM00389">
    <property type="entry name" value="HOX"/>
    <property type="match status" value="1"/>
</dbReference>
<dbReference type="SUPFAM" id="SSF46689">
    <property type="entry name" value="Homeodomain-like"/>
    <property type="match status" value="1"/>
</dbReference>
<dbReference type="PROSITE" id="PS00027">
    <property type="entry name" value="HOMEOBOX_1"/>
    <property type="match status" value="1"/>
</dbReference>
<dbReference type="PROSITE" id="PS50071">
    <property type="entry name" value="HOMEOBOX_2"/>
    <property type="match status" value="1"/>
</dbReference>
<sequence length="260" mass="29761">MSTSGTISNYYVDSLIMHENEDLLSSRYASGSLAQASRQAALTEHPDFSPCNFQSKATVFSTSWSPVHAQSSANMPTVYHPYMHQAPIAAAPDGRYMRSWLDPMPGTLSFPGLPSSRHYGIKPEPVASRRSDCTTFETHTLALSEYTCGTSPADKRVSEVSFSENNGETESNADKLHMDPNNPSANWLHARSTRKKRCPYTKHQTLELEKEFLFNMYLTRDRRYEVARVLNLTERQVKIWFQNRRMKMKKINKERPKDDR</sequence>
<proteinExistence type="inferred from homology"/>
<gene>
    <name type="primary">HOXA9</name>
</gene>
<feature type="chain" id="PRO_0000200087" description="Homeobox protein Hox-A9">
    <location>
        <begin position="1"/>
        <end position="260"/>
    </location>
</feature>
<feature type="DNA-binding region" description="Homeobox" evidence="2">
    <location>
        <begin position="193"/>
        <end position="252"/>
    </location>
</feature>
<feature type="region of interest" description="Disordered" evidence="3">
    <location>
        <begin position="157"/>
        <end position="181"/>
    </location>
</feature>
<feature type="compositionally biased region" description="Polar residues" evidence="3">
    <location>
        <begin position="160"/>
        <end position="170"/>
    </location>
</feature>
<comment type="function">
    <text evidence="1">Sequence-specific transcription factor which is part of a developmental regulatory system that provides cells with specific positional identities on the anterior-posterior axis.</text>
</comment>
<comment type="subcellular location">
    <subcellularLocation>
        <location evidence="2">Nucleus</location>
    </subcellularLocation>
</comment>
<comment type="similarity">
    <text evidence="4">Belongs to the Abd-B homeobox family.</text>
</comment>
<name>HXA9_HETFR</name>
<reference key="1">
    <citation type="journal article" date="2000" name="Proc. Natl. Acad. Sci. U.S.A.">
        <title>Hox cluster genomics in the horn shark, Heterodontus francisci.</title>
        <authorList>
            <person name="Kim C.B."/>
            <person name="Amemiya C."/>
            <person name="Bailey W."/>
            <person name="Kawasaki K."/>
            <person name="Mezey J."/>
            <person name="Miller W."/>
            <person name="Minoshima S."/>
            <person name="Shimizu N."/>
            <person name="Wagner G."/>
            <person name="Ruddle F."/>
        </authorList>
    </citation>
    <scope>NUCLEOTIDE SEQUENCE [GENOMIC DNA]</scope>
</reference>
<keyword id="KW-0217">Developmental protein</keyword>
<keyword id="KW-0238">DNA-binding</keyword>
<keyword id="KW-0371">Homeobox</keyword>
<keyword id="KW-0539">Nucleus</keyword>
<keyword id="KW-0804">Transcription</keyword>
<keyword id="KW-0805">Transcription regulation</keyword>
<organism>
    <name type="scientific">Heterodontus francisci</name>
    <name type="common">Horn shark</name>
    <name type="synonym">Cestracion francisci</name>
    <dbReference type="NCBI Taxonomy" id="7792"/>
    <lineage>
        <taxon>Eukaryota</taxon>
        <taxon>Metazoa</taxon>
        <taxon>Chordata</taxon>
        <taxon>Craniata</taxon>
        <taxon>Vertebrata</taxon>
        <taxon>Chondrichthyes</taxon>
        <taxon>Elasmobranchii</taxon>
        <taxon>Galeomorphii</taxon>
        <taxon>Heterodontoidea</taxon>
        <taxon>Heterodontiformes</taxon>
        <taxon>Heterodontidae</taxon>
        <taxon>Heterodontus</taxon>
    </lineage>
</organism>
<accession>Q9IA26</accession>
<evidence type="ECO:0000250" key="1"/>
<evidence type="ECO:0000255" key="2">
    <source>
        <dbReference type="PROSITE-ProRule" id="PRU00108"/>
    </source>
</evidence>
<evidence type="ECO:0000256" key="3">
    <source>
        <dbReference type="SAM" id="MobiDB-lite"/>
    </source>
</evidence>
<evidence type="ECO:0000305" key="4"/>
<protein>
    <recommendedName>
        <fullName>Homeobox protein Hox-A9</fullName>
    </recommendedName>
</protein>